<proteinExistence type="inferred from homology"/>
<sequence length="80" mass="9358">MKKDIHPEYRPVVFMDTTTGYQFLSGSTKRSNETVEFEGETYPLIRVEISSDSHPFYTGRQKFTQADGRVDRFNKKYGLK</sequence>
<organism>
    <name type="scientific">Streptococcus pneumoniae (strain ATCC 700669 / Spain 23F-1)</name>
    <dbReference type="NCBI Taxonomy" id="561276"/>
    <lineage>
        <taxon>Bacteria</taxon>
        <taxon>Bacillati</taxon>
        <taxon>Bacillota</taxon>
        <taxon>Bacilli</taxon>
        <taxon>Lactobacillales</taxon>
        <taxon>Streptococcaceae</taxon>
        <taxon>Streptococcus</taxon>
    </lineage>
</organism>
<comment type="subunit">
    <text evidence="1">Part of the 50S ribosomal subunit.</text>
</comment>
<comment type="similarity">
    <text evidence="1">Belongs to the bacterial ribosomal protein bL31 family. Type B subfamily.</text>
</comment>
<accession>B8ZK23</accession>
<reference key="1">
    <citation type="journal article" date="2009" name="J. Bacteriol.">
        <title>Role of conjugative elements in the evolution of the multidrug-resistant pandemic clone Streptococcus pneumoniae Spain23F ST81.</title>
        <authorList>
            <person name="Croucher N.J."/>
            <person name="Walker D."/>
            <person name="Romero P."/>
            <person name="Lennard N."/>
            <person name="Paterson G.K."/>
            <person name="Bason N.C."/>
            <person name="Mitchell A.M."/>
            <person name="Quail M.A."/>
            <person name="Andrew P.W."/>
            <person name="Parkhill J."/>
            <person name="Bentley S.D."/>
            <person name="Mitchell T.J."/>
        </authorList>
    </citation>
    <scope>NUCLEOTIDE SEQUENCE [LARGE SCALE GENOMIC DNA]</scope>
    <source>
        <strain>ATCC 700669 / Spain 23F-1</strain>
    </source>
</reference>
<protein>
    <recommendedName>
        <fullName evidence="1">Large ribosomal subunit protein bL31B</fullName>
    </recommendedName>
    <alternativeName>
        <fullName evidence="2">50S ribosomal protein L31 type B</fullName>
    </alternativeName>
</protein>
<feature type="chain" id="PRO_1000176995" description="Large ribosomal subunit protein bL31B">
    <location>
        <begin position="1"/>
        <end position="80"/>
    </location>
</feature>
<dbReference type="EMBL" id="FM211187">
    <property type="protein sequence ID" value="CAR68999.1"/>
    <property type="molecule type" value="Genomic_DNA"/>
</dbReference>
<dbReference type="RefSeq" id="WP_000710764.1">
    <property type="nucleotide sequence ID" value="NC_011900.1"/>
</dbReference>
<dbReference type="SMR" id="B8ZK23"/>
<dbReference type="KEGG" id="sne:SPN23F11930"/>
<dbReference type="HOGENOM" id="CLU_114306_2_2_9"/>
<dbReference type="GO" id="GO:1990904">
    <property type="term" value="C:ribonucleoprotein complex"/>
    <property type="evidence" value="ECO:0007669"/>
    <property type="project" value="UniProtKB-KW"/>
</dbReference>
<dbReference type="GO" id="GO:0005840">
    <property type="term" value="C:ribosome"/>
    <property type="evidence" value="ECO:0007669"/>
    <property type="project" value="UniProtKB-KW"/>
</dbReference>
<dbReference type="GO" id="GO:0003735">
    <property type="term" value="F:structural constituent of ribosome"/>
    <property type="evidence" value="ECO:0007669"/>
    <property type="project" value="InterPro"/>
</dbReference>
<dbReference type="GO" id="GO:0006412">
    <property type="term" value="P:translation"/>
    <property type="evidence" value="ECO:0007669"/>
    <property type="project" value="UniProtKB-UniRule"/>
</dbReference>
<dbReference type="Gene3D" id="4.10.830.30">
    <property type="entry name" value="Ribosomal protein L31"/>
    <property type="match status" value="1"/>
</dbReference>
<dbReference type="HAMAP" id="MF_00502">
    <property type="entry name" value="Ribosomal_bL31_2"/>
    <property type="match status" value="1"/>
</dbReference>
<dbReference type="InterPro" id="IPR034704">
    <property type="entry name" value="Ribosomal_bL28/bL31-like_sf"/>
</dbReference>
<dbReference type="InterPro" id="IPR002150">
    <property type="entry name" value="Ribosomal_bL31"/>
</dbReference>
<dbReference type="InterPro" id="IPR027493">
    <property type="entry name" value="Ribosomal_bL31_B"/>
</dbReference>
<dbReference type="InterPro" id="IPR042105">
    <property type="entry name" value="Ribosomal_bL31_sf"/>
</dbReference>
<dbReference type="NCBIfam" id="TIGR00105">
    <property type="entry name" value="L31"/>
    <property type="match status" value="1"/>
</dbReference>
<dbReference type="NCBIfam" id="NF002462">
    <property type="entry name" value="PRK01678.1"/>
    <property type="match status" value="1"/>
</dbReference>
<dbReference type="PANTHER" id="PTHR33280">
    <property type="entry name" value="50S RIBOSOMAL PROTEIN L31, CHLOROPLASTIC"/>
    <property type="match status" value="1"/>
</dbReference>
<dbReference type="PANTHER" id="PTHR33280:SF1">
    <property type="entry name" value="LARGE RIBOSOMAL SUBUNIT PROTEIN BL31C"/>
    <property type="match status" value="1"/>
</dbReference>
<dbReference type="Pfam" id="PF01197">
    <property type="entry name" value="Ribosomal_L31"/>
    <property type="match status" value="1"/>
</dbReference>
<dbReference type="PRINTS" id="PR01249">
    <property type="entry name" value="RIBOSOMALL31"/>
</dbReference>
<dbReference type="SUPFAM" id="SSF143800">
    <property type="entry name" value="L28p-like"/>
    <property type="match status" value="1"/>
</dbReference>
<dbReference type="PROSITE" id="PS01143">
    <property type="entry name" value="RIBOSOMAL_L31"/>
    <property type="match status" value="1"/>
</dbReference>
<keyword id="KW-0687">Ribonucleoprotein</keyword>
<keyword id="KW-0689">Ribosomal protein</keyword>
<name>RL31B_STRPJ</name>
<evidence type="ECO:0000255" key="1">
    <source>
        <dbReference type="HAMAP-Rule" id="MF_00502"/>
    </source>
</evidence>
<evidence type="ECO:0000305" key="2"/>
<gene>
    <name evidence="1" type="primary">rpmE2</name>
    <name type="ordered locus">SPN23F11930</name>
</gene>